<keyword id="KW-0067">ATP-binding</keyword>
<keyword id="KW-0963">Cytoplasm</keyword>
<keyword id="KW-0418">Kinase</keyword>
<keyword id="KW-0444">Lipid biosynthesis</keyword>
<keyword id="KW-0443">Lipid metabolism</keyword>
<keyword id="KW-0460">Magnesium</keyword>
<keyword id="KW-0479">Metal-binding</keyword>
<keyword id="KW-0547">Nucleotide-binding</keyword>
<keyword id="KW-0594">Phospholipid biosynthesis</keyword>
<keyword id="KW-1208">Phospholipid metabolism</keyword>
<keyword id="KW-0808">Transferase</keyword>
<name>YEGS_PSEU2</name>
<gene>
    <name type="ordered locus">Psyr_3300</name>
</gene>
<sequence>MTQRRAMLILHGKQALNEDVRDAVADKRKQGWELDVRLTWEAGDAQRLVSEALAAGHRHIVAGGGDGTLRDIAEALALAETSASLTILPLGTANDFARAAGVPLEVSKALQLMDVAPRAVDLGEVGGKLFLNMATGGFGSQVTANTSEDLKKVLGGAAYLFTGLTRFSELHSAHGELTGPDFHWRGDLLALGIGNGRQAGGGHELCPTALADDGLLDISILPAPQEVVGTLRSLLEGGLGIDNMFIRARLPWVELKSTQGLDINLDGEPLSGEDLRFEARPGALHVHLPADSPLLGGAPKLNRPD</sequence>
<dbReference type="EC" id="2.7.1.-" evidence="1"/>
<dbReference type="EMBL" id="CP000075">
    <property type="protein sequence ID" value="AAY38332.1"/>
    <property type="molecule type" value="Genomic_DNA"/>
</dbReference>
<dbReference type="RefSeq" id="YP_236370.1">
    <property type="nucleotide sequence ID" value="NC_007005.1"/>
</dbReference>
<dbReference type="SMR" id="Q4ZR90"/>
<dbReference type="STRING" id="205918.Psyr_3300"/>
<dbReference type="KEGG" id="psb:Psyr_3300"/>
<dbReference type="PATRIC" id="fig|205918.7.peg.3374"/>
<dbReference type="eggNOG" id="COG1597">
    <property type="taxonomic scope" value="Bacteria"/>
</dbReference>
<dbReference type="HOGENOM" id="CLU_045532_1_1_6"/>
<dbReference type="OrthoDB" id="142078at2"/>
<dbReference type="Proteomes" id="UP000000426">
    <property type="component" value="Chromosome"/>
</dbReference>
<dbReference type="GO" id="GO:0005737">
    <property type="term" value="C:cytoplasm"/>
    <property type="evidence" value="ECO:0007669"/>
    <property type="project" value="UniProtKB-SubCell"/>
</dbReference>
<dbReference type="GO" id="GO:0005886">
    <property type="term" value="C:plasma membrane"/>
    <property type="evidence" value="ECO:0007669"/>
    <property type="project" value="TreeGrafter"/>
</dbReference>
<dbReference type="GO" id="GO:0005524">
    <property type="term" value="F:ATP binding"/>
    <property type="evidence" value="ECO:0007669"/>
    <property type="project" value="UniProtKB-UniRule"/>
</dbReference>
<dbReference type="GO" id="GO:0001727">
    <property type="term" value="F:lipid kinase activity"/>
    <property type="evidence" value="ECO:0007669"/>
    <property type="project" value="UniProtKB-UniRule"/>
</dbReference>
<dbReference type="GO" id="GO:0000287">
    <property type="term" value="F:magnesium ion binding"/>
    <property type="evidence" value="ECO:0007669"/>
    <property type="project" value="UniProtKB-UniRule"/>
</dbReference>
<dbReference type="GO" id="GO:0008654">
    <property type="term" value="P:phospholipid biosynthetic process"/>
    <property type="evidence" value="ECO:0007669"/>
    <property type="project" value="UniProtKB-UniRule"/>
</dbReference>
<dbReference type="Gene3D" id="2.60.200.40">
    <property type="match status" value="1"/>
</dbReference>
<dbReference type="Gene3D" id="3.40.50.10330">
    <property type="entry name" value="Probable inorganic polyphosphate/atp-NAD kinase, domain 1"/>
    <property type="match status" value="1"/>
</dbReference>
<dbReference type="HAMAP" id="MF_01377">
    <property type="entry name" value="YegS"/>
    <property type="match status" value="1"/>
</dbReference>
<dbReference type="InterPro" id="IPR017438">
    <property type="entry name" value="ATP-NAD_kinase_N"/>
</dbReference>
<dbReference type="InterPro" id="IPR005218">
    <property type="entry name" value="Diacylglycerol/lipid_kinase"/>
</dbReference>
<dbReference type="InterPro" id="IPR001206">
    <property type="entry name" value="Diacylglycerol_kinase_cat_dom"/>
</dbReference>
<dbReference type="InterPro" id="IPR022433">
    <property type="entry name" value="Lip_kinase_YegS"/>
</dbReference>
<dbReference type="InterPro" id="IPR050187">
    <property type="entry name" value="Lipid_Phosphate_FormReg"/>
</dbReference>
<dbReference type="InterPro" id="IPR016064">
    <property type="entry name" value="NAD/diacylglycerol_kinase_sf"/>
</dbReference>
<dbReference type="InterPro" id="IPR045540">
    <property type="entry name" value="YegS/DAGK_C"/>
</dbReference>
<dbReference type="NCBIfam" id="TIGR03702">
    <property type="entry name" value="lip_kinase_YegS"/>
    <property type="match status" value="1"/>
</dbReference>
<dbReference type="NCBIfam" id="NF009602">
    <property type="entry name" value="PRK13054.1"/>
    <property type="match status" value="1"/>
</dbReference>
<dbReference type="NCBIfam" id="TIGR00147">
    <property type="entry name" value="YegS/Rv2252/BmrU family lipid kinase"/>
    <property type="match status" value="1"/>
</dbReference>
<dbReference type="PANTHER" id="PTHR12358:SF106">
    <property type="entry name" value="LIPID KINASE YEGS"/>
    <property type="match status" value="1"/>
</dbReference>
<dbReference type="PANTHER" id="PTHR12358">
    <property type="entry name" value="SPHINGOSINE KINASE"/>
    <property type="match status" value="1"/>
</dbReference>
<dbReference type="Pfam" id="PF00781">
    <property type="entry name" value="DAGK_cat"/>
    <property type="match status" value="1"/>
</dbReference>
<dbReference type="Pfam" id="PF19279">
    <property type="entry name" value="YegS_C"/>
    <property type="match status" value="1"/>
</dbReference>
<dbReference type="SMART" id="SM00046">
    <property type="entry name" value="DAGKc"/>
    <property type="match status" value="1"/>
</dbReference>
<dbReference type="SUPFAM" id="SSF111331">
    <property type="entry name" value="NAD kinase/diacylglycerol kinase-like"/>
    <property type="match status" value="1"/>
</dbReference>
<dbReference type="PROSITE" id="PS50146">
    <property type="entry name" value="DAGK"/>
    <property type="match status" value="1"/>
</dbReference>
<reference key="1">
    <citation type="journal article" date="2005" name="Proc. Natl. Acad. Sci. U.S.A.">
        <title>Comparison of the complete genome sequences of Pseudomonas syringae pv. syringae B728a and pv. tomato DC3000.</title>
        <authorList>
            <person name="Feil H."/>
            <person name="Feil W.S."/>
            <person name="Chain P."/>
            <person name="Larimer F."/>
            <person name="Dibartolo G."/>
            <person name="Copeland A."/>
            <person name="Lykidis A."/>
            <person name="Trong S."/>
            <person name="Nolan M."/>
            <person name="Goltsman E."/>
            <person name="Thiel J."/>
            <person name="Malfatti S."/>
            <person name="Loper J.E."/>
            <person name="Lapidus A."/>
            <person name="Detter J.C."/>
            <person name="Land M."/>
            <person name="Richardson P.M."/>
            <person name="Kyrpides N.C."/>
            <person name="Ivanova N."/>
            <person name="Lindow S.E."/>
        </authorList>
    </citation>
    <scope>NUCLEOTIDE SEQUENCE [LARGE SCALE GENOMIC DNA]</scope>
    <source>
        <strain>B728a</strain>
    </source>
</reference>
<comment type="function">
    <text evidence="1">Probably phosphorylates lipids; the in vivo substrate is unknown.</text>
</comment>
<comment type="cofactor">
    <cofactor evidence="1">
        <name>Mg(2+)</name>
        <dbReference type="ChEBI" id="CHEBI:18420"/>
    </cofactor>
    <cofactor evidence="1">
        <name>Ca(2+)</name>
        <dbReference type="ChEBI" id="CHEBI:29108"/>
    </cofactor>
    <text evidence="1">Binds 1 Mg(2+) ion per subunit. Ca(2+) may be able to substitute.</text>
</comment>
<comment type="subcellular location">
    <subcellularLocation>
        <location evidence="1">Cytoplasm</location>
    </subcellularLocation>
</comment>
<comment type="similarity">
    <text evidence="1">Belongs to the diacylglycerol/lipid kinase family. YegS lipid kinase subfamily.</text>
</comment>
<feature type="chain" id="PRO_0000292153" description="Probable lipid kinase YegS-like">
    <location>
        <begin position="1"/>
        <end position="305"/>
    </location>
</feature>
<feature type="domain" description="DAGKc" evidence="1">
    <location>
        <begin position="1"/>
        <end position="129"/>
    </location>
</feature>
<feature type="active site" description="Proton acceptor" evidence="1">
    <location>
        <position position="268"/>
    </location>
</feature>
<feature type="binding site" evidence="1">
    <location>
        <position position="39"/>
    </location>
    <ligand>
        <name>ATP</name>
        <dbReference type="ChEBI" id="CHEBI:30616"/>
    </ligand>
</feature>
<feature type="binding site" evidence="1">
    <location>
        <begin position="65"/>
        <end position="71"/>
    </location>
    <ligand>
        <name>ATP</name>
        <dbReference type="ChEBI" id="CHEBI:30616"/>
    </ligand>
</feature>
<feature type="binding site" evidence="1">
    <location>
        <position position="92"/>
    </location>
    <ligand>
        <name>ATP</name>
        <dbReference type="ChEBI" id="CHEBI:30616"/>
    </ligand>
</feature>
<feature type="binding site" evidence="1">
    <location>
        <position position="210"/>
    </location>
    <ligand>
        <name>Mg(2+)</name>
        <dbReference type="ChEBI" id="CHEBI:18420"/>
    </ligand>
</feature>
<feature type="binding site" evidence="1">
    <location>
        <position position="213"/>
    </location>
    <ligand>
        <name>Mg(2+)</name>
        <dbReference type="ChEBI" id="CHEBI:18420"/>
    </ligand>
</feature>
<feature type="binding site" evidence="1">
    <location>
        <position position="215"/>
    </location>
    <ligand>
        <name>Mg(2+)</name>
        <dbReference type="ChEBI" id="CHEBI:18420"/>
    </ligand>
</feature>
<accession>Q4ZR90</accession>
<protein>
    <recommendedName>
        <fullName evidence="1">Probable lipid kinase YegS-like</fullName>
        <ecNumber evidence="1">2.7.1.-</ecNumber>
    </recommendedName>
</protein>
<evidence type="ECO:0000255" key="1">
    <source>
        <dbReference type="HAMAP-Rule" id="MF_01377"/>
    </source>
</evidence>
<organism>
    <name type="scientific">Pseudomonas syringae pv. syringae (strain B728a)</name>
    <dbReference type="NCBI Taxonomy" id="205918"/>
    <lineage>
        <taxon>Bacteria</taxon>
        <taxon>Pseudomonadati</taxon>
        <taxon>Pseudomonadota</taxon>
        <taxon>Gammaproteobacteria</taxon>
        <taxon>Pseudomonadales</taxon>
        <taxon>Pseudomonadaceae</taxon>
        <taxon>Pseudomonas</taxon>
        <taxon>Pseudomonas syringae</taxon>
    </lineage>
</organism>
<proteinExistence type="inferred from homology"/>